<sequence>MVCLALVRAAYEHIYLVRKVSHACRCHQHRAWSSKPAASQSAVQGAPGSVLEILGKSYPQDDHTNLTQKVLSKVGRNLHNQKFHPLWLIKERVKEHFYQQYMVRSRTPLFSVYDQLPPVVTTWQNFDSLLIPADHPSRKKGDNYYLNRAHMLRAHTSAHQWDLLHAGLNAFLVVGDVYRRDQIDCQHYPVFHQLEGVRLFSKHELFAGVKDGESLQLFEEGSRSAHKQETHTMEAVKLVEFDLKQVLTRLVTHLFGDGLEVRWVDCYFPFTHPSFEMEINFRGEWLEVLGCGVMEQQLVNSAGAQDRIGWAFGLGLERLAMVLYDIPDIRLFWSEDERFLKQFLLSDINQSVKFQPLSKYPAVFNDISFWLPSENYTENDFYDIVRTVGGDLVEKVDLIDKFEHPKTHRTSHCYRITYRHMERTLSQREVGNVHQAVQEAAVQLLGVEGRF</sequence>
<comment type="function">
    <text evidence="2">Is responsible for the charging of tRNA(Phe) with phenylalanine in mitochondrial translation. To a lesser extent, also catalyzes direct attachment of m-Tyr (an oxidized version of Phe) to tRNA(Phe), thereby opening the way for delivery of the misacylated tRNA to the ribosome and incorporation of ROS-damaged amino acid into proteins (By similarity).</text>
</comment>
<comment type="catalytic activity">
    <reaction evidence="2">
        <text>tRNA(Phe) + L-phenylalanine + ATP = L-phenylalanyl-tRNA(Phe) + AMP + diphosphate + H(+)</text>
        <dbReference type="Rhea" id="RHEA:19413"/>
        <dbReference type="Rhea" id="RHEA-COMP:9668"/>
        <dbReference type="Rhea" id="RHEA-COMP:9699"/>
        <dbReference type="ChEBI" id="CHEBI:15378"/>
        <dbReference type="ChEBI" id="CHEBI:30616"/>
        <dbReference type="ChEBI" id="CHEBI:33019"/>
        <dbReference type="ChEBI" id="CHEBI:58095"/>
        <dbReference type="ChEBI" id="CHEBI:78442"/>
        <dbReference type="ChEBI" id="CHEBI:78531"/>
        <dbReference type="ChEBI" id="CHEBI:456215"/>
        <dbReference type="EC" id="6.1.1.20"/>
    </reaction>
</comment>
<comment type="subunit">
    <text evidence="1">Monomer.</text>
</comment>
<comment type="subcellular location">
    <subcellularLocation>
        <location evidence="6">Mitochondrion matrix</location>
    </subcellularLocation>
    <subcellularLocation>
        <location evidence="3">Mitochondrion</location>
    </subcellularLocation>
</comment>
<comment type="similarity">
    <text evidence="6">Belongs to the class-II aminoacyl-tRNA synthetase family.</text>
</comment>
<keyword id="KW-0007">Acetylation</keyword>
<keyword id="KW-0030">Aminoacyl-tRNA synthetase</keyword>
<keyword id="KW-0067">ATP-binding</keyword>
<keyword id="KW-0436">Ligase</keyword>
<keyword id="KW-0496">Mitochondrion</keyword>
<keyword id="KW-0547">Nucleotide-binding</keyword>
<keyword id="KW-0648">Protein biosynthesis</keyword>
<keyword id="KW-1185">Reference proteome</keyword>
<keyword id="KW-0809">Transit peptide</keyword>
<organism>
    <name type="scientific">Mus musculus</name>
    <name type="common">Mouse</name>
    <dbReference type="NCBI Taxonomy" id="10090"/>
    <lineage>
        <taxon>Eukaryota</taxon>
        <taxon>Metazoa</taxon>
        <taxon>Chordata</taxon>
        <taxon>Craniata</taxon>
        <taxon>Vertebrata</taxon>
        <taxon>Euteleostomi</taxon>
        <taxon>Mammalia</taxon>
        <taxon>Eutheria</taxon>
        <taxon>Euarchontoglires</taxon>
        <taxon>Glires</taxon>
        <taxon>Rodentia</taxon>
        <taxon>Myomorpha</taxon>
        <taxon>Muroidea</taxon>
        <taxon>Muridae</taxon>
        <taxon>Murinae</taxon>
        <taxon>Mus</taxon>
        <taxon>Mus</taxon>
    </lineage>
</organism>
<evidence type="ECO:0000250" key="1"/>
<evidence type="ECO:0000250" key="2">
    <source>
        <dbReference type="UniProtKB" id="O95363"/>
    </source>
</evidence>
<evidence type="ECO:0000250" key="3">
    <source>
        <dbReference type="UniProtKB" id="Q6AYQ3"/>
    </source>
</evidence>
<evidence type="ECO:0000255" key="4"/>
<evidence type="ECO:0000255" key="5">
    <source>
        <dbReference type="PROSITE-ProRule" id="PRU00778"/>
    </source>
</evidence>
<evidence type="ECO:0000305" key="6"/>
<accession>Q99M01</accession>
<accession>Q3TBZ7</accession>
<accession>Q9CYY0</accession>
<gene>
    <name type="primary">Fars2</name>
    <name type="synonym">Fars1</name>
</gene>
<feature type="transit peptide" description="Mitochondrion" evidence="4">
    <location>
        <begin position="1"/>
        <end status="unknown"/>
    </location>
</feature>
<feature type="chain" id="PRO_0000035814" description="Phenylalanine--tRNA ligase, mitochondrial">
    <location>
        <begin status="unknown"/>
        <end position="451"/>
    </location>
</feature>
<feature type="domain" description="FDX-ACB" evidence="5">
    <location>
        <begin position="358"/>
        <end position="450"/>
    </location>
</feature>
<feature type="binding site" evidence="1">
    <location>
        <begin position="157"/>
        <end position="160"/>
    </location>
    <ligand>
        <name>substrate</name>
    </ligand>
</feature>
<feature type="binding site" evidence="1">
    <location>
        <position position="179"/>
    </location>
    <ligand>
        <name>substrate</name>
    </ligand>
</feature>
<feature type="binding site" evidence="1">
    <location>
        <begin position="186"/>
        <end position="188"/>
    </location>
    <ligand>
        <name>substrate</name>
    </ligand>
</feature>
<feature type="binding site" evidence="1">
    <location>
        <begin position="193"/>
        <end position="195"/>
    </location>
    <ligand>
        <name>substrate</name>
    </ligand>
</feature>
<feature type="binding site" evidence="1">
    <location>
        <position position="287"/>
    </location>
    <ligand>
        <name>substrate</name>
    </ligand>
</feature>
<feature type="binding site" evidence="1">
    <location>
        <position position="312"/>
    </location>
    <ligand>
        <name>substrate</name>
    </ligand>
</feature>
<feature type="modified residue" description="N6-acetyllysine" evidence="2">
    <location>
        <position position="202"/>
    </location>
</feature>
<feature type="sequence conflict" description="In Ref. 1; BAB28715." evidence="6" ref="1">
    <original>H</original>
    <variation>N</variation>
    <location>
        <position position="253"/>
    </location>
</feature>
<feature type="sequence conflict" description="In Ref. 1; BAB28715." evidence="6" ref="1">
    <original>E</original>
    <variation>G</variation>
    <location>
        <position position="394"/>
    </location>
</feature>
<feature type="sequence conflict" description="In Ref. 1; BAB28715." evidence="6" ref="1">
    <original>E</original>
    <variation>K</variation>
    <location>
        <position position="403"/>
    </location>
</feature>
<feature type="sequence conflict" description="In Ref. 1; BAB28715." evidence="6" ref="1">
    <original>C</original>
    <variation>L</variation>
    <location>
        <position position="413"/>
    </location>
</feature>
<name>SYFM_MOUSE</name>
<dbReference type="EC" id="6.1.1.20" evidence="2"/>
<dbReference type="EMBL" id="AK013211">
    <property type="protein sequence ID" value="BAB28715.1"/>
    <property type="molecule type" value="mRNA"/>
</dbReference>
<dbReference type="EMBL" id="AK170986">
    <property type="protein sequence ID" value="BAE42160.1"/>
    <property type="molecule type" value="mRNA"/>
</dbReference>
<dbReference type="EMBL" id="BC002147">
    <property type="protein sequence ID" value="AAH02147.1"/>
    <property type="molecule type" value="mRNA"/>
</dbReference>
<dbReference type="CCDS" id="CCDS26453.1"/>
<dbReference type="RefSeq" id="NP_077236.1">
    <property type="nucleotide sequence ID" value="NM_024274.3"/>
</dbReference>
<dbReference type="RefSeq" id="XP_006516832.1">
    <property type="nucleotide sequence ID" value="XM_006516769.4"/>
</dbReference>
<dbReference type="RefSeq" id="XP_011242647.1">
    <property type="nucleotide sequence ID" value="XM_011244345.3"/>
</dbReference>
<dbReference type="RefSeq" id="XP_030103262.1">
    <property type="nucleotide sequence ID" value="XM_030247402.2"/>
</dbReference>
<dbReference type="RefSeq" id="XP_030103263.1">
    <property type="nucleotide sequence ID" value="XM_030247403.2"/>
</dbReference>
<dbReference type="RefSeq" id="XP_036014053.1">
    <property type="nucleotide sequence ID" value="XM_036158160.1"/>
</dbReference>
<dbReference type="RefSeq" id="XP_036014054.1">
    <property type="nucleotide sequence ID" value="XM_036158161.1"/>
</dbReference>
<dbReference type="SMR" id="Q99M01"/>
<dbReference type="BioGRID" id="213774">
    <property type="interactions" value="3"/>
</dbReference>
<dbReference type="FunCoup" id="Q99M01">
    <property type="interactions" value="2659"/>
</dbReference>
<dbReference type="STRING" id="10090.ENSMUSP00000021857"/>
<dbReference type="PhosphoSitePlus" id="Q99M01"/>
<dbReference type="SwissPalm" id="Q99M01"/>
<dbReference type="jPOST" id="Q99M01"/>
<dbReference type="PaxDb" id="10090-ENSMUSP00000021857"/>
<dbReference type="PeptideAtlas" id="Q99M01"/>
<dbReference type="ProteomicsDB" id="254705"/>
<dbReference type="Pumba" id="Q99M01"/>
<dbReference type="Antibodypedia" id="2800">
    <property type="antibodies" value="132 antibodies from 24 providers"/>
</dbReference>
<dbReference type="DNASU" id="69955"/>
<dbReference type="Ensembl" id="ENSMUST00000021857.13">
    <property type="protein sequence ID" value="ENSMUSP00000021857.6"/>
    <property type="gene ID" value="ENSMUSG00000021420.14"/>
</dbReference>
<dbReference type="Ensembl" id="ENSMUST00000224241.2">
    <property type="protein sequence ID" value="ENSMUSP00000153628.2"/>
    <property type="gene ID" value="ENSMUSG00000021420.14"/>
</dbReference>
<dbReference type="Ensembl" id="ENSMUST00000224611.2">
    <property type="protein sequence ID" value="ENSMUSP00000153658.2"/>
    <property type="gene ID" value="ENSMUSG00000021420.14"/>
</dbReference>
<dbReference type="GeneID" id="69955"/>
<dbReference type="KEGG" id="mmu:69955"/>
<dbReference type="UCSC" id="uc007qck.2">
    <property type="organism name" value="mouse"/>
</dbReference>
<dbReference type="AGR" id="MGI:1917205"/>
<dbReference type="CTD" id="10667"/>
<dbReference type="MGI" id="MGI:1917205">
    <property type="gene designation" value="Fars2"/>
</dbReference>
<dbReference type="VEuPathDB" id="HostDB:ENSMUSG00000021420"/>
<dbReference type="eggNOG" id="KOG2783">
    <property type="taxonomic scope" value="Eukaryota"/>
</dbReference>
<dbReference type="GeneTree" id="ENSGT00940000158071"/>
<dbReference type="HOGENOM" id="CLU_022696_1_0_1"/>
<dbReference type="InParanoid" id="Q99M01"/>
<dbReference type="OMA" id="PISHYPQ"/>
<dbReference type="PhylomeDB" id="Q99M01"/>
<dbReference type="TreeFam" id="TF105798"/>
<dbReference type="BioGRID-ORCS" id="69955">
    <property type="hits" value="30 hits in 78 CRISPR screens"/>
</dbReference>
<dbReference type="ChiTaRS" id="Fars2">
    <property type="organism name" value="mouse"/>
</dbReference>
<dbReference type="PRO" id="PR:Q99M01"/>
<dbReference type="Proteomes" id="UP000000589">
    <property type="component" value="Chromosome 13"/>
</dbReference>
<dbReference type="RNAct" id="Q99M01">
    <property type="molecule type" value="protein"/>
</dbReference>
<dbReference type="Bgee" id="ENSMUSG00000021420">
    <property type="expression patterns" value="Expressed in dentate gyrus of hippocampal formation granule cell and 273 other cell types or tissues"/>
</dbReference>
<dbReference type="ExpressionAtlas" id="Q99M01">
    <property type="expression patterns" value="baseline and differential"/>
</dbReference>
<dbReference type="GO" id="GO:0005759">
    <property type="term" value="C:mitochondrial matrix"/>
    <property type="evidence" value="ECO:0007669"/>
    <property type="project" value="UniProtKB-SubCell"/>
</dbReference>
<dbReference type="GO" id="GO:0005739">
    <property type="term" value="C:mitochondrion"/>
    <property type="evidence" value="ECO:0007005"/>
    <property type="project" value="MGI"/>
</dbReference>
<dbReference type="GO" id="GO:0005524">
    <property type="term" value="F:ATP binding"/>
    <property type="evidence" value="ECO:0007669"/>
    <property type="project" value="UniProtKB-KW"/>
</dbReference>
<dbReference type="GO" id="GO:0004826">
    <property type="term" value="F:phenylalanine-tRNA ligase activity"/>
    <property type="evidence" value="ECO:0000250"/>
    <property type="project" value="UniProtKB"/>
</dbReference>
<dbReference type="GO" id="GO:0000049">
    <property type="term" value="F:tRNA binding"/>
    <property type="evidence" value="ECO:0000250"/>
    <property type="project" value="UniProtKB"/>
</dbReference>
<dbReference type="GO" id="GO:0006432">
    <property type="term" value="P:phenylalanyl-tRNA aminoacylation"/>
    <property type="evidence" value="ECO:0000250"/>
    <property type="project" value="UniProtKB"/>
</dbReference>
<dbReference type="GO" id="GO:0008033">
    <property type="term" value="P:tRNA processing"/>
    <property type="evidence" value="ECO:0000250"/>
    <property type="project" value="UniProtKB"/>
</dbReference>
<dbReference type="CDD" id="cd00496">
    <property type="entry name" value="PheRS_alpha_core"/>
    <property type="match status" value="1"/>
</dbReference>
<dbReference type="FunFam" id="3.30.70.380:FF:000002">
    <property type="entry name" value="phenylalanine--tRNA ligase, mitochondrial"/>
    <property type="match status" value="1"/>
</dbReference>
<dbReference type="FunFam" id="3.30.930.10:FF:000041">
    <property type="entry name" value="Phenylalanyl-tRNA synthetase 2, mitochondrial"/>
    <property type="match status" value="1"/>
</dbReference>
<dbReference type="Gene3D" id="3.30.930.10">
    <property type="entry name" value="Bira Bifunctional Protein, Domain 2"/>
    <property type="match status" value="1"/>
</dbReference>
<dbReference type="Gene3D" id="3.30.70.380">
    <property type="entry name" value="Ferrodoxin-fold anticodon-binding domain"/>
    <property type="match status" value="1"/>
</dbReference>
<dbReference type="InterPro" id="IPR006195">
    <property type="entry name" value="aa-tRNA-synth_II"/>
</dbReference>
<dbReference type="InterPro" id="IPR045864">
    <property type="entry name" value="aa-tRNA-synth_II/BPL/LPL"/>
</dbReference>
<dbReference type="InterPro" id="IPR005121">
    <property type="entry name" value="Fdx_antiC-bd"/>
</dbReference>
<dbReference type="InterPro" id="IPR036690">
    <property type="entry name" value="Fdx_antiC-bd_sf"/>
</dbReference>
<dbReference type="InterPro" id="IPR004530">
    <property type="entry name" value="Phe-tRNA-synth_IIc_mito"/>
</dbReference>
<dbReference type="InterPro" id="IPR002319">
    <property type="entry name" value="Phenylalanyl-tRNA_Synthase"/>
</dbReference>
<dbReference type="NCBIfam" id="TIGR00469">
    <property type="entry name" value="pheS_mito"/>
    <property type="match status" value="1"/>
</dbReference>
<dbReference type="PANTHER" id="PTHR11538:SF41">
    <property type="entry name" value="PHENYLALANINE--TRNA LIGASE, MITOCHONDRIAL"/>
    <property type="match status" value="1"/>
</dbReference>
<dbReference type="PANTHER" id="PTHR11538">
    <property type="entry name" value="PHENYLALANYL-TRNA SYNTHETASE"/>
    <property type="match status" value="1"/>
</dbReference>
<dbReference type="Pfam" id="PF03147">
    <property type="entry name" value="FDX-ACB"/>
    <property type="match status" value="1"/>
</dbReference>
<dbReference type="Pfam" id="PF01409">
    <property type="entry name" value="tRNA-synt_2d"/>
    <property type="match status" value="2"/>
</dbReference>
<dbReference type="SMART" id="SM00896">
    <property type="entry name" value="FDX-ACB"/>
    <property type="match status" value="1"/>
</dbReference>
<dbReference type="SUPFAM" id="SSF54991">
    <property type="entry name" value="Anticodon-binding domain of PheRS"/>
    <property type="match status" value="1"/>
</dbReference>
<dbReference type="SUPFAM" id="SSF55681">
    <property type="entry name" value="Class II aaRS and biotin synthetases"/>
    <property type="match status" value="1"/>
</dbReference>
<dbReference type="PROSITE" id="PS50862">
    <property type="entry name" value="AA_TRNA_LIGASE_II"/>
    <property type="match status" value="1"/>
</dbReference>
<dbReference type="PROSITE" id="PS51447">
    <property type="entry name" value="FDX_ACB"/>
    <property type="match status" value="1"/>
</dbReference>
<proteinExistence type="evidence at protein level"/>
<protein>
    <recommendedName>
        <fullName>Phenylalanine--tRNA ligase, mitochondrial</fullName>
        <ecNumber evidence="2">6.1.1.20</ecNumber>
    </recommendedName>
    <alternativeName>
        <fullName>Phenylalanyl-tRNA synthetase</fullName>
        <shortName>PheRS</shortName>
    </alternativeName>
</protein>
<reference key="1">
    <citation type="journal article" date="2005" name="Science">
        <title>The transcriptional landscape of the mammalian genome.</title>
        <authorList>
            <person name="Carninci P."/>
            <person name="Kasukawa T."/>
            <person name="Katayama S."/>
            <person name="Gough J."/>
            <person name="Frith M.C."/>
            <person name="Maeda N."/>
            <person name="Oyama R."/>
            <person name="Ravasi T."/>
            <person name="Lenhard B."/>
            <person name="Wells C."/>
            <person name="Kodzius R."/>
            <person name="Shimokawa K."/>
            <person name="Bajic V.B."/>
            <person name="Brenner S.E."/>
            <person name="Batalov S."/>
            <person name="Forrest A.R."/>
            <person name="Zavolan M."/>
            <person name="Davis M.J."/>
            <person name="Wilming L.G."/>
            <person name="Aidinis V."/>
            <person name="Allen J.E."/>
            <person name="Ambesi-Impiombato A."/>
            <person name="Apweiler R."/>
            <person name="Aturaliya R.N."/>
            <person name="Bailey T.L."/>
            <person name="Bansal M."/>
            <person name="Baxter L."/>
            <person name="Beisel K.W."/>
            <person name="Bersano T."/>
            <person name="Bono H."/>
            <person name="Chalk A.M."/>
            <person name="Chiu K.P."/>
            <person name="Choudhary V."/>
            <person name="Christoffels A."/>
            <person name="Clutterbuck D.R."/>
            <person name="Crowe M.L."/>
            <person name="Dalla E."/>
            <person name="Dalrymple B.P."/>
            <person name="de Bono B."/>
            <person name="Della Gatta G."/>
            <person name="di Bernardo D."/>
            <person name="Down T."/>
            <person name="Engstrom P."/>
            <person name="Fagiolini M."/>
            <person name="Faulkner G."/>
            <person name="Fletcher C.F."/>
            <person name="Fukushima T."/>
            <person name="Furuno M."/>
            <person name="Futaki S."/>
            <person name="Gariboldi M."/>
            <person name="Georgii-Hemming P."/>
            <person name="Gingeras T.R."/>
            <person name="Gojobori T."/>
            <person name="Green R.E."/>
            <person name="Gustincich S."/>
            <person name="Harbers M."/>
            <person name="Hayashi Y."/>
            <person name="Hensch T.K."/>
            <person name="Hirokawa N."/>
            <person name="Hill D."/>
            <person name="Huminiecki L."/>
            <person name="Iacono M."/>
            <person name="Ikeo K."/>
            <person name="Iwama A."/>
            <person name="Ishikawa T."/>
            <person name="Jakt M."/>
            <person name="Kanapin A."/>
            <person name="Katoh M."/>
            <person name="Kawasawa Y."/>
            <person name="Kelso J."/>
            <person name="Kitamura H."/>
            <person name="Kitano H."/>
            <person name="Kollias G."/>
            <person name="Krishnan S.P."/>
            <person name="Kruger A."/>
            <person name="Kummerfeld S.K."/>
            <person name="Kurochkin I.V."/>
            <person name="Lareau L.F."/>
            <person name="Lazarevic D."/>
            <person name="Lipovich L."/>
            <person name="Liu J."/>
            <person name="Liuni S."/>
            <person name="McWilliam S."/>
            <person name="Madan Babu M."/>
            <person name="Madera M."/>
            <person name="Marchionni L."/>
            <person name="Matsuda H."/>
            <person name="Matsuzawa S."/>
            <person name="Miki H."/>
            <person name="Mignone F."/>
            <person name="Miyake S."/>
            <person name="Morris K."/>
            <person name="Mottagui-Tabar S."/>
            <person name="Mulder N."/>
            <person name="Nakano N."/>
            <person name="Nakauchi H."/>
            <person name="Ng P."/>
            <person name="Nilsson R."/>
            <person name="Nishiguchi S."/>
            <person name="Nishikawa S."/>
            <person name="Nori F."/>
            <person name="Ohara O."/>
            <person name="Okazaki Y."/>
            <person name="Orlando V."/>
            <person name="Pang K.C."/>
            <person name="Pavan W.J."/>
            <person name="Pavesi G."/>
            <person name="Pesole G."/>
            <person name="Petrovsky N."/>
            <person name="Piazza S."/>
            <person name="Reed J."/>
            <person name="Reid J.F."/>
            <person name="Ring B.Z."/>
            <person name="Ringwald M."/>
            <person name="Rost B."/>
            <person name="Ruan Y."/>
            <person name="Salzberg S.L."/>
            <person name="Sandelin A."/>
            <person name="Schneider C."/>
            <person name="Schoenbach C."/>
            <person name="Sekiguchi K."/>
            <person name="Semple C.A."/>
            <person name="Seno S."/>
            <person name="Sessa L."/>
            <person name="Sheng Y."/>
            <person name="Shibata Y."/>
            <person name="Shimada H."/>
            <person name="Shimada K."/>
            <person name="Silva D."/>
            <person name="Sinclair B."/>
            <person name="Sperling S."/>
            <person name="Stupka E."/>
            <person name="Sugiura K."/>
            <person name="Sultana R."/>
            <person name="Takenaka Y."/>
            <person name="Taki K."/>
            <person name="Tammoja K."/>
            <person name="Tan S.L."/>
            <person name="Tang S."/>
            <person name="Taylor M.S."/>
            <person name="Tegner J."/>
            <person name="Teichmann S.A."/>
            <person name="Ueda H.R."/>
            <person name="van Nimwegen E."/>
            <person name="Verardo R."/>
            <person name="Wei C.L."/>
            <person name="Yagi K."/>
            <person name="Yamanishi H."/>
            <person name="Zabarovsky E."/>
            <person name="Zhu S."/>
            <person name="Zimmer A."/>
            <person name="Hide W."/>
            <person name="Bult C."/>
            <person name="Grimmond S.M."/>
            <person name="Teasdale R.D."/>
            <person name="Liu E.T."/>
            <person name="Brusic V."/>
            <person name="Quackenbush J."/>
            <person name="Wahlestedt C."/>
            <person name="Mattick J.S."/>
            <person name="Hume D.A."/>
            <person name="Kai C."/>
            <person name="Sasaki D."/>
            <person name="Tomaru Y."/>
            <person name="Fukuda S."/>
            <person name="Kanamori-Katayama M."/>
            <person name="Suzuki M."/>
            <person name="Aoki J."/>
            <person name="Arakawa T."/>
            <person name="Iida J."/>
            <person name="Imamura K."/>
            <person name="Itoh M."/>
            <person name="Kato T."/>
            <person name="Kawaji H."/>
            <person name="Kawagashira N."/>
            <person name="Kawashima T."/>
            <person name="Kojima M."/>
            <person name="Kondo S."/>
            <person name="Konno H."/>
            <person name="Nakano K."/>
            <person name="Ninomiya N."/>
            <person name="Nishio T."/>
            <person name="Okada M."/>
            <person name="Plessy C."/>
            <person name="Shibata K."/>
            <person name="Shiraki T."/>
            <person name="Suzuki S."/>
            <person name="Tagami M."/>
            <person name="Waki K."/>
            <person name="Watahiki A."/>
            <person name="Okamura-Oho Y."/>
            <person name="Suzuki H."/>
            <person name="Kawai J."/>
            <person name="Hayashizaki Y."/>
        </authorList>
    </citation>
    <scope>NUCLEOTIDE SEQUENCE [LARGE SCALE MRNA]</scope>
    <source>
        <strain>C57BL/6J</strain>
        <strain>NOD</strain>
        <tissue>Embryo</tissue>
    </source>
</reference>
<reference key="2">
    <citation type="journal article" date="2004" name="Genome Res.">
        <title>The status, quality, and expansion of the NIH full-length cDNA project: the Mammalian Gene Collection (MGC).</title>
        <authorList>
            <consortium name="The MGC Project Team"/>
        </authorList>
    </citation>
    <scope>NUCLEOTIDE SEQUENCE [LARGE SCALE MRNA]</scope>
    <source>
        <strain>FVB/N</strain>
        <tissue>Mammary tumor</tissue>
    </source>
</reference>
<reference key="3">
    <citation type="journal article" date="2010" name="Cell">
        <title>A tissue-specific atlas of mouse protein phosphorylation and expression.</title>
        <authorList>
            <person name="Huttlin E.L."/>
            <person name="Jedrychowski M.P."/>
            <person name="Elias J.E."/>
            <person name="Goswami T."/>
            <person name="Rad R."/>
            <person name="Beausoleil S.A."/>
            <person name="Villen J."/>
            <person name="Haas W."/>
            <person name="Sowa M.E."/>
            <person name="Gygi S.P."/>
        </authorList>
    </citation>
    <scope>IDENTIFICATION BY MASS SPECTROMETRY [LARGE SCALE ANALYSIS]</scope>
    <source>
        <tissue>Brown adipose tissue</tissue>
        <tissue>Heart</tissue>
        <tissue>Kidney</tissue>
        <tissue>Lung</tissue>
    </source>
</reference>